<dbReference type="EMBL" id="AE014075">
    <property type="protein sequence ID" value="AAN83062.1"/>
    <property type="molecule type" value="Genomic_DNA"/>
</dbReference>
<dbReference type="SMR" id="P0AD90"/>
<dbReference type="STRING" id="199310.c5499"/>
<dbReference type="KEGG" id="ecc:c5499"/>
<dbReference type="HOGENOM" id="CLU_221068_0_0_6"/>
<dbReference type="BioCyc" id="ECOL199310:C5499-MONOMER"/>
<dbReference type="Proteomes" id="UP000001410">
    <property type="component" value="Chromosome"/>
</dbReference>
<dbReference type="GO" id="GO:0031556">
    <property type="term" value="P:transcriptional attenuation by ribosome"/>
    <property type="evidence" value="ECO:0007669"/>
    <property type="project" value="InterPro"/>
</dbReference>
<dbReference type="InterPro" id="IPR012620">
    <property type="entry name" value="Trp_operon_leader_peptide"/>
</dbReference>
<dbReference type="NCBIfam" id="TIGR02616">
    <property type="entry name" value="tnaC_leader"/>
    <property type="match status" value="1"/>
</dbReference>
<dbReference type="Pfam" id="PF08053">
    <property type="entry name" value="Tna_leader"/>
    <property type="match status" value="1"/>
</dbReference>
<keyword id="KW-0428">Leader peptide</keyword>
<keyword id="KW-1185">Reference proteome</keyword>
<proteinExistence type="predicted"/>
<organism>
    <name type="scientific">Escherichia coli O6:H1 (strain CFT073 / ATCC 700928 / UPEC)</name>
    <dbReference type="NCBI Taxonomy" id="199310"/>
    <lineage>
        <taxon>Bacteria</taxon>
        <taxon>Pseudomonadati</taxon>
        <taxon>Pseudomonadota</taxon>
        <taxon>Gammaproteobacteria</taxon>
        <taxon>Enterobacterales</taxon>
        <taxon>Enterobacteriaceae</taxon>
        <taxon>Escherichia</taxon>
    </lineage>
</organism>
<name>LPTN_ECOL6</name>
<gene>
    <name type="primary">tnaL</name>
    <name type="ordered locus">c5499</name>
</gene>
<sequence>MNILHICVTSKWFNIDNKIVDHRP</sequence>
<feature type="peptide" id="PRO_0000044013" description="Tryptophanase operon leader peptide">
    <location>
        <begin position="1"/>
        <end position="24"/>
    </location>
</feature>
<reference key="1">
    <citation type="journal article" date="2002" name="Proc. Natl. Acad. Sci. U.S.A.">
        <title>Extensive mosaic structure revealed by the complete genome sequence of uropathogenic Escherichia coli.</title>
        <authorList>
            <person name="Welch R.A."/>
            <person name="Burland V."/>
            <person name="Plunkett G. III"/>
            <person name="Redford P."/>
            <person name="Roesch P."/>
            <person name="Rasko D."/>
            <person name="Buckles E.L."/>
            <person name="Liou S.-R."/>
            <person name="Boutin A."/>
            <person name="Hackett J."/>
            <person name="Stroud D."/>
            <person name="Mayhew G.F."/>
            <person name="Rose D.J."/>
            <person name="Zhou S."/>
            <person name="Schwartz D.C."/>
            <person name="Perna N.T."/>
            <person name="Mobley H.L.T."/>
            <person name="Donnenberg M.S."/>
            <person name="Blattner F.R."/>
        </authorList>
    </citation>
    <scope>NUCLEOTIDE SEQUENCE [LARGE SCALE GENOMIC DNA]</scope>
    <source>
        <strain>CFT073 / ATCC 700928 / UPEC</strain>
    </source>
</reference>
<protein>
    <recommendedName>
        <fullName>Tryptophanase operon leader peptide</fullName>
    </recommendedName>
</protein>
<accession>P0AD90</accession>
<accession>P09408</accession>